<protein>
    <recommendedName>
        <fullName>Protein maelstrom</fullName>
    </recommendedName>
</protein>
<dbReference type="EMBL" id="CM000159">
    <property type="protein sequence ID" value="EDW95553.1"/>
    <property type="status" value="ALT_SEQ"/>
    <property type="molecule type" value="Genomic_DNA"/>
</dbReference>
<dbReference type="EMBL" id="AF532006">
    <property type="protein sequence ID" value="AAQ09905.1"/>
    <property type="molecule type" value="mRNA"/>
</dbReference>
<dbReference type="RefSeq" id="XP_002095841.2">
    <property type="nucleotide sequence ID" value="XM_002095805.2"/>
</dbReference>
<dbReference type="RefSeq" id="XP_015051063.1">
    <property type="nucleotide sequence ID" value="XM_015195577.1"/>
</dbReference>
<dbReference type="RefSeq" id="XP_015051064.1">
    <property type="nucleotide sequence ID" value="XM_015195578.1"/>
</dbReference>
<dbReference type="RefSeq" id="XP_015051065.1">
    <property type="nucleotide sequence ID" value="XM_015195579.1"/>
</dbReference>
<dbReference type="RefSeq" id="XP_015051066.1">
    <property type="nucleotide sequence ID" value="XM_015195580.1"/>
</dbReference>
<dbReference type="RefSeq" id="XP_015051067.1">
    <property type="nucleotide sequence ID" value="XM_015195581.1"/>
</dbReference>
<dbReference type="RefSeq" id="XP_015051068.1">
    <property type="nucleotide sequence ID" value="XM_015195582.1"/>
</dbReference>
<dbReference type="RefSeq" id="XP_015051070.1">
    <property type="nucleotide sequence ID" value="XM_015195584.1"/>
</dbReference>
<dbReference type="RefSeq" id="XP_015051071.1">
    <property type="nucleotide sequence ID" value="XM_015195585.1"/>
</dbReference>
<dbReference type="RefSeq" id="XP_015051072.1">
    <property type="nucleotide sequence ID" value="XM_015195586.1"/>
</dbReference>
<dbReference type="SMR" id="B4PIP5"/>
<dbReference type="EnsemblMetazoa" id="FBtr0393059">
    <property type="protein sequence ID" value="FBpp0352468"/>
    <property type="gene ID" value="FBgn0067951"/>
</dbReference>
<dbReference type="EnsemblMetazoa" id="FBtr0394889">
    <property type="protein sequence ID" value="FBpp0354175"/>
    <property type="gene ID" value="FBgn0067951"/>
</dbReference>
<dbReference type="EnsemblMetazoa" id="FBtr0396005">
    <property type="protein sequence ID" value="FBpp0355229"/>
    <property type="gene ID" value="FBgn0067951"/>
</dbReference>
<dbReference type="EnsemblMetazoa" id="FBtr0396382">
    <property type="protein sequence ID" value="FBpp0355579"/>
    <property type="gene ID" value="FBgn0067951"/>
</dbReference>
<dbReference type="EnsemblMetazoa" id="FBtr0397549">
    <property type="protein sequence ID" value="FBpp0356678"/>
    <property type="gene ID" value="FBgn0067951"/>
</dbReference>
<dbReference type="EnsemblMetazoa" id="FBtr0398346">
    <property type="protein sequence ID" value="FBpp0357438"/>
    <property type="gene ID" value="FBgn0067951"/>
</dbReference>
<dbReference type="EnsemblMetazoa" id="FBtr0399397">
    <property type="protein sequence ID" value="FBpp0358423"/>
    <property type="gene ID" value="FBgn0067951"/>
</dbReference>
<dbReference type="EnsemblMetazoa" id="FBtr0402874">
    <property type="protein sequence ID" value="FBpp0361694"/>
    <property type="gene ID" value="FBgn0067951"/>
</dbReference>
<dbReference type="EnsemblMetazoa" id="FBtr0403366">
    <property type="protein sequence ID" value="FBpp0362148"/>
    <property type="gene ID" value="FBgn0067951"/>
</dbReference>
<dbReference type="EnsemblMetazoa" id="FBtr0404506">
    <property type="protein sequence ID" value="FBpp0363211"/>
    <property type="gene ID" value="FBgn0067951"/>
</dbReference>
<dbReference type="EnsemblMetazoa" id="FBtr0405164">
    <property type="protein sequence ID" value="FBpp0363826"/>
    <property type="gene ID" value="FBgn0067951"/>
</dbReference>
<dbReference type="EnsemblMetazoa" id="XM_015195583.3">
    <property type="protein sequence ID" value="XP_015051069.1"/>
    <property type="gene ID" value="LOC6535179"/>
</dbReference>
<dbReference type="GeneID" id="6535179"/>
<dbReference type="CTD" id="84944"/>
<dbReference type="eggNOG" id="ENOG502QTQB">
    <property type="taxonomic scope" value="Eukaryota"/>
</dbReference>
<dbReference type="OrthoDB" id="24555at2759"/>
<dbReference type="Proteomes" id="UP000002282">
    <property type="component" value="Chromosome 3L"/>
</dbReference>
<dbReference type="GO" id="GO:0005737">
    <property type="term" value="C:cytoplasm"/>
    <property type="evidence" value="ECO:0000250"/>
    <property type="project" value="UniProtKB"/>
</dbReference>
<dbReference type="GO" id="GO:0005634">
    <property type="term" value="C:nucleus"/>
    <property type="evidence" value="ECO:0000250"/>
    <property type="project" value="UniProtKB"/>
</dbReference>
<dbReference type="GO" id="GO:0043186">
    <property type="term" value="C:P granule"/>
    <property type="evidence" value="ECO:0000250"/>
    <property type="project" value="UniProtKB"/>
</dbReference>
<dbReference type="GO" id="GO:0048471">
    <property type="term" value="C:perinuclear region of cytoplasm"/>
    <property type="evidence" value="ECO:0000250"/>
    <property type="project" value="UniProtKB"/>
</dbReference>
<dbReference type="GO" id="GO:0000976">
    <property type="term" value="F:transcription cis-regulatory region binding"/>
    <property type="evidence" value="ECO:0000250"/>
    <property type="project" value="UniProtKB"/>
</dbReference>
<dbReference type="GO" id="GO:0030718">
    <property type="term" value="P:germ-line stem cell population maintenance"/>
    <property type="evidence" value="ECO:0000250"/>
    <property type="project" value="UniProtKB"/>
</dbReference>
<dbReference type="GO" id="GO:0007140">
    <property type="term" value="P:male meiotic nuclear division"/>
    <property type="evidence" value="ECO:0007669"/>
    <property type="project" value="TreeGrafter"/>
</dbReference>
<dbReference type="GO" id="GO:0045892">
    <property type="term" value="P:negative regulation of DNA-templated transcription"/>
    <property type="evidence" value="ECO:0000250"/>
    <property type="project" value="UniProtKB"/>
</dbReference>
<dbReference type="GO" id="GO:0048477">
    <property type="term" value="P:oogenesis"/>
    <property type="evidence" value="ECO:0007669"/>
    <property type="project" value="UniProtKB-KW"/>
</dbReference>
<dbReference type="GO" id="GO:0034587">
    <property type="term" value="P:piRNA processing"/>
    <property type="evidence" value="ECO:0000250"/>
    <property type="project" value="UniProtKB"/>
</dbReference>
<dbReference type="GO" id="GO:0060964">
    <property type="term" value="P:regulation of miRNA-mediated gene silencing"/>
    <property type="evidence" value="ECO:0007669"/>
    <property type="project" value="InterPro"/>
</dbReference>
<dbReference type="GO" id="GO:0031047">
    <property type="term" value="P:regulatory ncRNA-mediated gene silencing"/>
    <property type="evidence" value="ECO:0000250"/>
    <property type="project" value="UniProtKB"/>
</dbReference>
<dbReference type="GO" id="GO:0007283">
    <property type="term" value="P:spermatogenesis"/>
    <property type="evidence" value="ECO:0000250"/>
    <property type="project" value="UniProtKB"/>
</dbReference>
<dbReference type="FunFam" id="1.10.30.10:FF:000057">
    <property type="entry name" value="Protein maelstrom 2"/>
    <property type="match status" value="1"/>
</dbReference>
<dbReference type="Gene3D" id="1.10.30.10">
    <property type="entry name" value="High mobility group box domain"/>
    <property type="match status" value="1"/>
</dbReference>
<dbReference type="InterPro" id="IPR036910">
    <property type="entry name" value="HMG_box_dom_sf"/>
</dbReference>
<dbReference type="InterPro" id="IPR024970">
    <property type="entry name" value="Maelstrom"/>
</dbReference>
<dbReference type="InterPro" id="IPR039259">
    <property type="entry name" value="Protein_maelstrom"/>
</dbReference>
<dbReference type="PANTHER" id="PTHR21358">
    <property type="entry name" value="PROTEIN MAELSTROM HOMOLOG"/>
    <property type="match status" value="1"/>
</dbReference>
<dbReference type="PANTHER" id="PTHR21358:SF4">
    <property type="entry name" value="PROTEIN MAELSTROM HOMOLOG"/>
    <property type="match status" value="1"/>
</dbReference>
<dbReference type="Pfam" id="PF13017">
    <property type="entry name" value="Maelstrom"/>
    <property type="match status" value="1"/>
</dbReference>
<dbReference type="SUPFAM" id="SSF47095">
    <property type="entry name" value="HMG-box"/>
    <property type="match status" value="1"/>
</dbReference>
<name>MAEL_DROYA</name>
<organism>
    <name type="scientific">Drosophila yakuba</name>
    <name type="common">Fruit fly</name>
    <dbReference type="NCBI Taxonomy" id="7245"/>
    <lineage>
        <taxon>Eukaryota</taxon>
        <taxon>Metazoa</taxon>
        <taxon>Ecdysozoa</taxon>
        <taxon>Arthropoda</taxon>
        <taxon>Hexapoda</taxon>
        <taxon>Insecta</taxon>
        <taxon>Pterygota</taxon>
        <taxon>Neoptera</taxon>
        <taxon>Endopterygota</taxon>
        <taxon>Diptera</taxon>
        <taxon>Brachycera</taxon>
        <taxon>Muscomorpha</taxon>
        <taxon>Ephydroidea</taxon>
        <taxon>Drosophilidae</taxon>
        <taxon>Drosophila</taxon>
        <taxon>Sophophora</taxon>
    </lineage>
</organism>
<comment type="function">
    <text evidence="1">Involved both in the piRNA and miRNA metabolic processes. As a component of the meiotic nuage, plays a central role during oogenesis by repressing transposable elements and preventing their mobilization, which is essential for the germline integrity. Repression of transposable elements is mediated via the piRNA metabolic process, which mediates the repression of transposable elements during meiosis by forming complexes composed of piRNAs and Piwi proteins and governs the repression of transposons. As a nuclear component, it is required for proper differentiation in the germline stem cell (GSC) lineage by repressing microRNA-7 (miR-7), thereby acting as an indirect regulator of bag-of-marbles (Bam). Acts by binding to the promoter of miR-7 gene and repressing its expression; miR-7 repression alleviates the Bam repression by miR-7, thereby allowing differentiation in the germline stem cell (GSC) lineage (By similarity).</text>
</comment>
<comment type="subcellular location">
    <subcellularLocation>
        <location>Cytoplasm</location>
    </subcellularLocation>
    <subcellularLocation>
        <location>Nucleus</location>
    </subcellularLocation>
    <text evidence="1">Component of the meiotic nuage, also named P granule, a germ-cell-specific organelle required to repress transposon activity during meiosis.</text>
</comment>
<comment type="similarity">
    <text evidence="3">Belongs to the maelstrom family.</text>
</comment>
<comment type="sequence caution" evidence="3">
    <conflict type="erroneous gene model prediction">
        <sequence resource="EMBL-CDS" id="EDW95553"/>
    </conflict>
</comment>
<gene>
    <name type="primary">mael</name>
    <name type="ORF">GE22634</name>
</gene>
<feature type="chain" id="PRO_0000367309" description="Protein maelstrom">
    <location>
        <begin position="1"/>
        <end position="465"/>
    </location>
</feature>
<feature type="DNA-binding region" description="HMG box">
    <location>
        <begin position="2"/>
        <end position="69"/>
    </location>
</feature>
<feature type="region of interest" description="Disordered" evidence="2">
    <location>
        <begin position="415"/>
        <end position="440"/>
    </location>
</feature>
<feature type="sequence conflict" description="In Ref. 2; AAQ09905." evidence="3" ref="2">
    <original>A</original>
    <variation>T</variation>
    <location>
        <position position="76"/>
    </location>
</feature>
<keyword id="KW-0963">Cytoplasm</keyword>
<keyword id="KW-0217">Developmental protein</keyword>
<keyword id="KW-0221">Differentiation</keyword>
<keyword id="KW-0238">DNA-binding</keyword>
<keyword id="KW-0469">Meiosis</keyword>
<keyword id="KW-0539">Nucleus</keyword>
<keyword id="KW-0896">Oogenesis</keyword>
<keyword id="KW-0678">Repressor</keyword>
<keyword id="KW-0943">RNA-mediated gene silencing</keyword>
<keyword id="KW-0804">Transcription</keyword>
<keyword id="KW-0805">Transcription regulation</keyword>
<evidence type="ECO:0000250" key="1"/>
<evidence type="ECO:0000256" key="2">
    <source>
        <dbReference type="SAM" id="MobiDB-lite"/>
    </source>
</evidence>
<evidence type="ECO:0000305" key="3"/>
<sequence>MAPKKHSGFMMFVNEWRNHNAEGRRMTLAQAVSHCGTIWEKMTTQQRGPYNSGAKDADVADRGKRERLNCYGQGIAQVDLAHKEAAESLMHMKRTTERLVINAKKSYDLENAKFVFATFNYFTKALTTDVYVPAEFAACEYSLKEGVRSIYSTMIDPGQIIFGQGSDALHHSSTTHDLPLPPNALGEKNMAKLYRNIVCYLTKCQGADKPLIVFTPTENIAMVNSCFRYLECEDDSGDGGRKIQVFDIQYLLFILKKAVMDVAGLNDEKINKFVTDAFFKKDFFEFTSGIACQYHEDNDRTKYCTQSMVTRWAYTFSDFMCGDLAITVQPGKHIPAETKPNYRIICSDASSLAHESSFESFYSCPGSRVKKETQSEDFSLSSSQISVASRSYTPTDHTSFTTDLTKVCEFPSLGMRKSSKHTGPSVSTQRERNAGAWNLPAHSRSIQKYSDNDFSVTDSVRKLKN</sequence>
<accession>B4PIP5</accession>
<accession>Q71D64</accession>
<reference key="1">
    <citation type="journal article" date="2007" name="Nature">
        <title>Evolution of genes and genomes on the Drosophila phylogeny.</title>
        <authorList>
            <consortium name="Drosophila 12 genomes consortium"/>
        </authorList>
    </citation>
    <scope>NUCLEOTIDE SEQUENCE [LARGE SCALE GENOMIC DNA]</scope>
    <source>
        <strain>Tai18E2 / Tucson 14021-0261.01</strain>
    </source>
</reference>
<reference key="2">
    <citation type="journal article" date="2003" name="Genome Res.">
        <title>An evolutionary analysis of orphan genes in Drosophila.</title>
        <authorList>
            <person name="Domazet-Loso T."/>
            <person name="Tautz D."/>
        </authorList>
    </citation>
    <scope>NUCLEOTIDE SEQUENCE [MRNA] OF 20-465</scope>
</reference>
<proteinExistence type="evidence at transcript level"/>